<feature type="chain" id="PRO_0000218800" description="DNA polymerase type-X family protein pol4">
    <location>
        <begin position="1"/>
        <end position="506"/>
    </location>
</feature>
<feature type="domain" description="BRCT" evidence="2">
    <location>
        <begin position="1"/>
        <end position="98"/>
    </location>
</feature>
<feature type="region of interest" description="Disordered" evidence="3">
    <location>
        <begin position="106"/>
        <end position="150"/>
    </location>
</feature>
<feature type="region of interest" description="Involved in ssDNA binding" evidence="1">
    <location>
        <begin position="348"/>
        <end position="357"/>
    </location>
</feature>
<feature type="binding site" evidence="1">
    <location>
        <position position="355"/>
    </location>
    <ligand>
        <name>Mg(2+)</name>
        <dbReference type="ChEBI" id="CHEBI:18420"/>
    </ligand>
</feature>
<feature type="binding site" evidence="1">
    <location>
        <position position="357"/>
    </location>
    <ligand>
        <name>Mg(2+)</name>
        <dbReference type="ChEBI" id="CHEBI:18420"/>
    </ligand>
</feature>
<feature type="binding site" evidence="1">
    <location>
        <position position="419"/>
    </location>
    <ligand>
        <name>Mg(2+)</name>
        <dbReference type="ChEBI" id="CHEBI:18420"/>
    </ligand>
</feature>
<reference key="1">
    <citation type="journal article" date="2002" name="Nature">
        <title>The genome sequence of Schizosaccharomyces pombe.</title>
        <authorList>
            <person name="Wood V."/>
            <person name="Gwilliam R."/>
            <person name="Rajandream M.A."/>
            <person name="Lyne M.H."/>
            <person name="Lyne R."/>
            <person name="Stewart A."/>
            <person name="Sgouros J.G."/>
            <person name="Peat N."/>
            <person name="Hayles J."/>
            <person name="Baker S.G."/>
            <person name="Basham D."/>
            <person name="Bowman S."/>
            <person name="Brooks K."/>
            <person name="Brown D."/>
            <person name="Brown S."/>
            <person name="Chillingworth T."/>
            <person name="Churcher C.M."/>
            <person name="Collins M."/>
            <person name="Connor R."/>
            <person name="Cronin A."/>
            <person name="Davis P."/>
            <person name="Feltwell T."/>
            <person name="Fraser A."/>
            <person name="Gentles S."/>
            <person name="Goble A."/>
            <person name="Hamlin N."/>
            <person name="Harris D.E."/>
            <person name="Hidalgo J."/>
            <person name="Hodgson G."/>
            <person name="Holroyd S."/>
            <person name="Hornsby T."/>
            <person name="Howarth S."/>
            <person name="Huckle E.J."/>
            <person name="Hunt S."/>
            <person name="Jagels K."/>
            <person name="James K.D."/>
            <person name="Jones L."/>
            <person name="Jones M."/>
            <person name="Leather S."/>
            <person name="McDonald S."/>
            <person name="McLean J."/>
            <person name="Mooney P."/>
            <person name="Moule S."/>
            <person name="Mungall K.L."/>
            <person name="Murphy L.D."/>
            <person name="Niblett D."/>
            <person name="Odell C."/>
            <person name="Oliver K."/>
            <person name="O'Neil S."/>
            <person name="Pearson D."/>
            <person name="Quail M.A."/>
            <person name="Rabbinowitsch E."/>
            <person name="Rutherford K.M."/>
            <person name="Rutter S."/>
            <person name="Saunders D."/>
            <person name="Seeger K."/>
            <person name="Sharp S."/>
            <person name="Skelton J."/>
            <person name="Simmonds M.N."/>
            <person name="Squares R."/>
            <person name="Squares S."/>
            <person name="Stevens K."/>
            <person name="Taylor K."/>
            <person name="Taylor R.G."/>
            <person name="Tivey A."/>
            <person name="Walsh S.V."/>
            <person name="Warren T."/>
            <person name="Whitehead S."/>
            <person name="Woodward J.R."/>
            <person name="Volckaert G."/>
            <person name="Aert R."/>
            <person name="Robben J."/>
            <person name="Grymonprez B."/>
            <person name="Weltjens I."/>
            <person name="Vanstreels E."/>
            <person name="Rieger M."/>
            <person name="Schaefer M."/>
            <person name="Mueller-Auer S."/>
            <person name="Gabel C."/>
            <person name="Fuchs M."/>
            <person name="Duesterhoeft A."/>
            <person name="Fritzc C."/>
            <person name="Holzer E."/>
            <person name="Moestl D."/>
            <person name="Hilbert H."/>
            <person name="Borzym K."/>
            <person name="Langer I."/>
            <person name="Beck A."/>
            <person name="Lehrach H."/>
            <person name="Reinhardt R."/>
            <person name="Pohl T.M."/>
            <person name="Eger P."/>
            <person name="Zimmermann W."/>
            <person name="Wedler H."/>
            <person name="Wambutt R."/>
            <person name="Purnelle B."/>
            <person name="Goffeau A."/>
            <person name="Cadieu E."/>
            <person name="Dreano S."/>
            <person name="Gloux S."/>
            <person name="Lelaure V."/>
            <person name="Mottier S."/>
            <person name="Galibert F."/>
            <person name="Aves S.J."/>
            <person name="Xiang Z."/>
            <person name="Hunt C."/>
            <person name="Moore K."/>
            <person name="Hurst S.M."/>
            <person name="Lucas M."/>
            <person name="Rochet M."/>
            <person name="Gaillardin C."/>
            <person name="Tallada V.A."/>
            <person name="Garzon A."/>
            <person name="Thode G."/>
            <person name="Daga R.R."/>
            <person name="Cruzado L."/>
            <person name="Jimenez J."/>
            <person name="Sanchez M."/>
            <person name="del Rey F."/>
            <person name="Benito J."/>
            <person name="Dominguez A."/>
            <person name="Revuelta J.L."/>
            <person name="Moreno S."/>
            <person name="Armstrong J."/>
            <person name="Forsburg S.L."/>
            <person name="Cerutti L."/>
            <person name="Lowe T."/>
            <person name="McCombie W.R."/>
            <person name="Paulsen I."/>
            <person name="Potashkin J."/>
            <person name="Shpakovski G.V."/>
            <person name="Ussery D."/>
            <person name="Barrell B.G."/>
            <person name="Nurse P."/>
        </authorList>
    </citation>
    <scope>NUCLEOTIDE SEQUENCE [LARGE SCALE GENOMIC DNA]</scope>
    <source>
        <strain>972 / ATCC 24843</strain>
    </source>
</reference>
<reference key="2">
    <citation type="journal article" date="2005" name="Nucleic Acids Res.">
        <title>Characterization of SpPol4, a unique X-family DNA polymerase in Schizosaccharomyces pombe.</title>
        <authorList>
            <person name="Gonzalez-Barrera S."/>
            <person name="Sanchez A."/>
            <person name="Ruiz J.F."/>
            <person name="Juarez R."/>
            <person name="Picher A.J."/>
            <person name="Terrados G."/>
            <person name="Andrade P."/>
            <person name="Blanco L."/>
        </authorList>
    </citation>
    <scope>FUNCTION</scope>
</reference>
<reference key="3">
    <citation type="journal article" date="2006" name="Nat. Biotechnol.">
        <title>ORFeome cloning and global analysis of protein localization in the fission yeast Schizosaccharomyces pombe.</title>
        <authorList>
            <person name="Matsuyama A."/>
            <person name="Arai R."/>
            <person name="Yashiroda Y."/>
            <person name="Shirai A."/>
            <person name="Kamata A."/>
            <person name="Sekido S."/>
            <person name="Kobayashi Y."/>
            <person name="Hashimoto A."/>
            <person name="Hamamoto M."/>
            <person name="Hiraoka Y."/>
            <person name="Horinouchi S."/>
            <person name="Yoshida M."/>
        </authorList>
    </citation>
    <scope>SUBCELLULAR LOCATION [LARGE SCALE ANALYSIS]</scope>
</reference>
<keyword id="KW-0963">Cytoplasm</keyword>
<keyword id="KW-0227">DNA damage</keyword>
<keyword id="KW-0234">DNA repair</keyword>
<keyword id="KW-0239">DNA-directed DNA polymerase</keyword>
<keyword id="KW-0460">Magnesium</keyword>
<keyword id="KW-0479">Metal-binding</keyword>
<keyword id="KW-0548">Nucleotidyltransferase</keyword>
<keyword id="KW-0539">Nucleus</keyword>
<keyword id="KW-1185">Reference proteome</keyword>
<keyword id="KW-0808">Transferase</keyword>
<gene>
    <name type="primary">pol4</name>
    <name type="ORF">SPAC2F7.06c</name>
</gene>
<dbReference type="EC" id="2.7.7.7"/>
<dbReference type="EMBL" id="CU329670">
    <property type="protein sequence ID" value="CAA90493.1"/>
    <property type="molecule type" value="Genomic_DNA"/>
</dbReference>
<dbReference type="PIR" id="T38554">
    <property type="entry name" value="S58150"/>
</dbReference>
<dbReference type="RefSeq" id="NP_592977.1">
    <property type="nucleotide sequence ID" value="NM_001018377.2"/>
</dbReference>
<dbReference type="SMR" id="Q09693"/>
<dbReference type="BioGRID" id="278134">
    <property type="interactions" value="4"/>
</dbReference>
<dbReference type="FunCoup" id="Q09693">
    <property type="interactions" value="299"/>
</dbReference>
<dbReference type="STRING" id="284812.Q09693"/>
<dbReference type="iPTMnet" id="Q09693"/>
<dbReference type="PaxDb" id="4896-SPAC2F7.06c.1"/>
<dbReference type="EnsemblFungi" id="SPAC2F7.06c.1">
    <property type="protein sequence ID" value="SPAC2F7.06c.1:pep"/>
    <property type="gene ID" value="SPAC2F7.06c"/>
</dbReference>
<dbReference type="GeneID" id="2541638"/>
<dbReference type="KEGG" id="spo:2541638"/>
<dbReference type="PomBase" id="SPAC2F7.06c">
    <property type="gene designation" value="pol4"/>
</dbReference>
<dbReference type="VEuPathDB" id="FungiDB:SPAC2F7.06c"/>
<dbReference type="eggNOG" id="KOG2534">
    <property type="taxonomic scope" value="Eukaryota"/>
</dbReference>
<dbReference type="HOGENOM" id="CLU_008698_1_1_1"/>
<dbReference type="InParanoid" id="Q09693"/>
<dbReference type="OMA" id="ERDVFDW"/>
<dbReference type="PhylomeDB" id="Q09693"/>
<dbReference type="PRO" id="PR:Q09693"/>
<dbReference type="Proteomes" id="UP000002485">
    <property type="component" value="Chromosome I"/>
</dbReference>
<dbReference type="GO" id="GO:0005829">
    <property type="term" value="C:cytosol"/>
    <property type="evidence" value="ECO:0007005"/>
    <property type="project" value="PomBase"/>
</dbReference>
<dbReference type="GO" id="GO:0005634">
    <property type="term" value="C:nucleus"/>
    <property type="evidence" value="ECO:0007005"/>
    <property type="project" value="PomBase"/>
</dbReference>
<dbReference type="GO" id="GO:0051575">
    <property type="term" value="F:5'-deoxyribose-5-phosphate lyase activity"/>
    <property type="evidence" value="ECO:0000314"/>
    <property type="project" value="PomBase"/>
</dbReference>
<dbReference type="GO" id="GO:0003887">
    <property type="term" value="F:DNA-directed DNA polymerase activity"/>
    <property type="evidence" value="ECO:0000314"/>
    <property type="project" value="PomBase"/>
</dbReference>
<dbReference type="GO" id="GO:0003899">
    <property type="term" value="F:DNA-directed RNA polymerase activity"/>
    <property type="evidence" value="ECO:0000314"/>
    <property type="project" value="PomBase"/>
</dbReference>
<dbReference type="GO" id="GO:0046872">
    <property type="term" value="F:metal ion binding"/>
    <property type="evidence" value="ECO:0007669"/>
    <property type="project" value="UniProtKB-KW"/>
</dbReference>
<dbReference type="GO" id="GO:1990165">
    <property type="term" value="F:single-strand break-containing DNA binding"/>
    <property type="evidence" value="ECO:0000314"/>
    <property type="project" value="PomBase"/>
</dbReference>
<dbReference type="GO" id="GO:0006284">
    <property type="term" value="P:base-excision repair"/>
    <property type="evidence" value="ECO:0000305"/>
    <property type="project" value="PomBase"/>
</dbReference>
<dbReference type="GO" id="GO:0006303">
    <property type="term" value="P:double-strand break repair via nonhomologous end joining"/>
    <property type="evidence" value="ECO:0000314"/>
    <property type="project" value="PomBase"/>
</dbReference>
<dbReference type="GO" id="GO:0042276">
    <property type="term" value="P:error-prone translesion synthesis"/>
    <property type="evidence" value="ECO:0000314"/>
    <property type="project" value="PomBase"/>
</dbReference>
<dbReference type="GO" id="GO:0061674">
    <property type="term" value="P:gap filling involved in double-strand break repair via nonhomologous end joining"/>
    <property type="evidence" value="ECO:0000315"/>
    <property type="project" value="PomBase"/>
</dbReference>
<dbReference type="CDD" id="cd00141">
    <property type="entry name" value="NT_POLXc"/>
    <property type="match status" value="1"/>
</dbReference>
<dbReference type="FunFam" id="3.30.210.10:FF:000005">
    <property type="entry name" value="DNA polymerase IV"/>
    <property type="match status" value="1"/>
</dbReference>
<dbReference type="FunFam" id="1.10.150.20:FF:000010">
    <property type="entry name" value="DNA polymerase lambda"/>
    <property type="match status" value="1"/>
</dbReference>
<dbReference type="FunFam" id="1.10.150.110:FF:000005">
    <property type="entry name" value="DNA polymerase POL4"/>
    <property type="match status" value="1"/>
</dbReference>
<dbReference type="Gene3D" id="1.10.150.20">
    <property type="entry name" value="5' to 3' exonuclease, C-terminal subdomain"/>
    <property type="match status" value="1"/>
</dbReference>
<dbReference type="Gene3D" id="3.30.460.10">
    <property type="entry name" value="Beta Polymerase, domain 2"/>
    <property type="match status" value="1"/>
</dbReference>
<dbReference type="Gene3D" id="1.10.150.110">
    <property type="entry name" value="DNA polymerase beta, N-terminal domain-like"/>
    <property type="match status" value="1"/>
</dbReference>
<dbReference type="Gene3D" id="3.30.210.10">
    <property type="entry name" value="DNA polymerase, thumb domain"/>
    <property type="match status" value="1"/>
</dbReference>
<dbReference type="InterPro" id="IPR001357">
    <property type="entry name" value="BRCT_dom"/>
</dbReference>
<dbReference type="InterPro" id="IPR002054">
    <property type="entry name" value="DNA-dir_DNA_pol_X"/>
</dbReference>
<dbReference type="InterPro" id="IPR019843">
    <property type="entry name" value="DNA_pol-X_BS"/>
</dbReference>
<dbReference type="InterPro" id="IPR010996">
    <property type="entry name" value="DNA_pol_b-like_N"/>
</dbReference>
<dbReference type="InterPro" id="IPR028207">
    <property type="entry name" value="DNA_pol_B_palm_palm"/>
</dbReference>
<dbReference type="InterPro" id="IPR018944">
    <property type="entry name" value="DNA_pol_lambd_fingers_domain"/>
</dbReference>
<dbReference type="InterPro" id="IPR027421">
    <property type="entry name" value="DNA_pol_lamdba_lyase_dom_sf"/>
</dbReference>
<dbReference type="InterPro" id="IPR037160">
    <property type="entry name" value="DNA_Pol_thumb_sf"/>
</dbReference>
<dbReference type="InterPro" id="IPR022312">
    <property type="entry name" value="DNA_pol_X"/>
</dbReference>
<dbReference type="InterPro" id="IPR002008">
    <property type="entry name" value="DNA_pol_X_beta-like"/>
</dbReference>
<dbReference type="InterPro" id="IPR043519">
    <property type="entry name" value="NT_sf"/>
</dbReference>
<dbReference type="InterPro" id="IPR029398">
    <property type="entry name" value="PolB_thumb"/>
</dbReference>
<dbReference type="PANTHER" id="PTHR11276">
    <property type="entry name" value="DNA POLYMERASE TYPE-X FAMILY MEMBER"/>
    <property type="match status" value="1"/>
</dbReference>
<dbReference type="PANTHER" id="PTHR11276:SF29">
    <property type="entry name" value="DNA POLYMERASE TYPE-X FAMILY PROTEIN POL4"/>
    <property type="match status" value="1"/>
</dbReference>
<dbReference type="Pfam" id="PF14792">
    <property type="entry name" value="DNA_pol_B_palm"/>
    <property type="match status" value="1"/>
</dbReference>
<dbReference type="Pfam" id="PF14791">
    <property type="entry name" value="DNA_pol_B_thumb"/>
    <property type="match status" value="1"/>
</dbReference>
<dbReference type="Pfam" id="PF10391">
    <property type="entry name" value="DNA_pol_lambd_f"/>
    <property type="match status" value="1"/>
</dbReference>
<dbReference type="Pfam" id="PF14716">
    <property type="entry name" value="HHH_8"/>
    <property type="match status" value="1"/>
</dbReference>
<dbReference type="PRINTS" id="PR00869">
    <property type="entry name" value="DNAPOLX"/>
</dbReference>
<dbReference type="PRINTS" id="PR00870">
    <property type="entry name" value="DNAPOLXBETA"/>
</dbReference>
<dbReference type="SMART" id="SM00483">
    <property type="entry name" value="POLXc"/>
    <property type="match status" value="1"/>
</dbReference>
<dbReference type="SUPFAM" id="SSF47802">
    <property type="entry name" value="DNA polymerase beta, N-terminal domain-like"/>
    <property type="match status" value="1"/>
</dbReference>
<dbReference type="SUPFAM" id="SSF81301">
    <property type="entry name" value="Nucleotidyltransferase"/>
    <property type="match status" value="1"/>
</dbReference>
<dbReference type="SUPFAM" id="SSF81585">
    <property type="entry name" value="PsbU/PolX domain-like"/>
    <property type="match status" value="1"/>
</dbReference>
<dbReference type="PROSITE" id="PS50172">
    <property type="entry name" value="BRCT"/>
    <property type="match status" value="1"/>
</dbReference>
<dbReference type="PROSITE" id="PS00522">
    <property type="entry name" value="DNA_POLYMERASE_X"/>
    <property type="match status" value="1"/>
</dbReference>
<proteinExistence type="inferred from homology"/>
<evidence type="ECO:0000250" key="1"/>
<evidence type="ECO:0000255" key="2">
    <source>
        <dbReference type="PROSITE-ProRule" id="PRU00033"/>
    </source>
</evidence>
<evidence type="ECO:0000256" key="3">
    <source>
        <dbReference type="SAM" id="MobiDB-lite"/>
    </source>
</evidence>
<evidence type="ECO:0000269" key="4">
    <source>
    </source>
</evidence>
<evidence type="ECO:0000269" key="5">
    <source>
    </source>
</evidence>
<evidence type="ECO:0000305" key="6"/>
<protein>
    <recommendedName>
        <fullName>DNA polymerase type-X family protein pol4</fullName>
        <ecNumber>2.7.7.7</ecNumber>
    </recommendedName>
</protein>
<organism>
    <name type="scientific">Schizosaccharomyces pombe (strain 972 / ATCC 24843)</name>
    <name type="common">Fission yeast</name>
    <dbReference type="NCBI Taxonomy" id="284812"/>
    <lineage>
        <taxon>Eukaryota</taxon>
        <taxon>Fungi</taxon>
        <taxon>Dikarya</taxon>
        <taxon>Ascomycota</taxon>
        <taxon>Taphrinomycotina</taxon>
        <taxon>Schizosaccharomycetes</taxon>
        <taxon>Schizosaccharomycetales</taxon>
        <taxon>Schizosaccharomycetaceae</taxon>
        <taxon>Schizosaccharomyces</taxon>
    </lineage>
</organism>
<name>DPO4_SCHPO</name>
<accession>Q09693</accession>
<comment type="function">
    <text evidence="4">Repair polymerase. Involved in gap-filling in DNA non-homologous end joining (NHEJ) required for double-strand break repair. Can incorporate a ribonucleotide (rNTP) into a primer DNA.</text>
</comment>
<comment type="catalytic activity">
    <reaction>
        <text>DNA(n) + a 2'-deoxyribonucleoside 5'-triphosphate = DNA(n+1) + diphosphate</text>
        <dbReference type="Rhea" id="RHEA:22508"/>
        <dbReference type="Rhea" id="RHEA-COMP:17339"/>
        <dbReference type="Rhea" id="RHEA-COMP:17340"/>
        <dbReference type="ChEBI" id="CHEBI:33019"/>
        <dbReference type="ChEBI" id="CHEBI:61560"/>
        <dbReference type="ChEBI" id="CHEBI:173112"/>
        <dbReference type="EC" id="2.7.7.7"/>
    </reaction>
</comment>
<comment type="cofactor">
    <cofactor evidence="1">
        <name>Mg(2+)</name>
        <dbReference type="ChEBI" id="CHEBI:18420"/>
    </cofactor>
</comment>
<comment type="subcellular location">
    <subcellularLocation>
        <location evidence="5">Cytoplasm</location>
    </subcellularLocation>
    <subcellularLocation>
        <location evidence="5">Nucleus</location>
    </subcellularLocation>
</comment>
<comment type="similarity">
    <text evidence="6">Belongs to the DNA polymerase type-X family.</text>
</comment>
<sequence length="506" mass="57396">MKILASSTNYVLHNRLSNSQYEDARSKIVNFGGEFTNDAAKADYIFVNYSQINRVRRELRTIGTPLETCVSCKLIVKIDWLNEPKESLTPGNPYVIWHRKPEMKVGSPYTPSTRPASHTEAPNDFENHETPNTENNNEVKSIDNVDQEGSVYPTTKEYPYVLEIPRYACQRKTPLKCVNQAFVNALSVLKTCREVNGESVRTRAYGMAIATIKAFPLPIDSAEQLEKMPGCGPKIVHLWKEFASTGTLKEAEEFQKDPASKILLLFYNIFGVGASHAAEWYQKGWRTIEQVRKHKDSFTKQIKVGLEFYEDFCKTVTIEEATEIYETIVSRMPDGIKIQSCLVGGFRRGKPVGADVDMVLSPSHTHSTKHLVDVLLRILDEEFQFRLISVQEHSCGGKKGYVMLAVILSNSSKINRRVDIIVVPPAYIGSAVLGWSGGIFFLRDLKLYANSHLGLSYDSFEIINLKTGKDICPDEFNEWKDPVEAEKDIFRYFSLEYIEPKFRNTG</sequence>